<gene>
    <name evidence="1" type="primary">serS</name>
    <name type="ordered locus">Chy400_0475</name>
</gene>
<proteinExistence type="inferred from homology"/>
<accession>B9LIV1</accession>
<organism>
    <name type="scientific">Chloroflexus aurantiacus (strain ATCC 29364 / DSM 637 / Y-400-fl)</name>
    <dbReference type="NCBI Taxonomy" id="480224"/>
    <lineage>
        <taxon>Bacteria</taxon>
        <taxon>Bacillati</taxon>
        <taxon>Chloroflexota</taxon>
        <taxon>Chloroflexia</taxon>
        <taxon>Chloroflexales</taxon>
        <taxon>Chloroflexineae</taxon>
        <taxon>Chloroflexaceae</taxon>
        <taxon>Chloroflexus</taxon>
    </lineage>
</organism>
<evidence type="ECO:0000255" key="1">
    <source>
        <dbReference type="HAMAP-Rule" id="MF_00176"/>
    </source>
</evidence>
<name>SYS_CHLSY</name>
<feature type="chain" id="PRO_1000123881" description="Serine--tRNA ligase">
    <location>
        <begin position="1"/>
        <end position="423"/>
    </location>
</feature>
<feature type="binding site" evidence="1">
    <location>
        <begin position="229"/>
        <end position="231"/>
    </location>
    <ligand>
        <name>L-serine</name>
        <dbReference type="ChEBI" id="CHEBI:33384"/>
    </ligand>
</feature>
<feature type="binding site" evidence="1">
    <location>
        <begin position="260"/>
        <end position="262"/>
    </location>
    <ligand>
        <name>ATP</name>
        <dbReference type="ChEBI" id="CHEBI:30616"/>
    </ligand>
</feature>
<feature type="binding site" evidence="1">
    <location>
        <position position="283"/>
    </location>
    <ligand>
        <name>L-serine</name>
        <dbReference type="ChEBI" id="CHEBI:33384"/>
    </ligand>
</feature>
<feature type="binding site" evidence="1">
    <location>
        <begin position="347"/>
        <end position="350"/>
    </location>
    <ligand>
        <name>ATP</name>
        <dbReference type="ChEBI" id="CHEBI:30616"/>
    </ligand>
</feature>
<feature type="binding site" evidence="1">
    <location>
        <position position="383"/>
    </location>
    <ligand>
        <name>L-serine</name>
        <dbReference type="ChEBI" id="CHEBI:33384"/>
    </ligand>
</feature>
<dbReference type="EC" id="6.1.1.11" evidence="1"/>
<dbReference type="EMBL" id="CP001364">
    <property type="protein sequence ID" value="ACM51913.1"/>
    <property type="molecule type" value="Genomic_DNA"/>
</dbReference>
<dbReference type="SMR" id="B9LIV1"/>
<dbReference type="KEGG" id="chl:Chy400_0475"/>
<dbReference type="HOGENOM" id="CLU_023797_1_1_0"/>
<dbReference type="OrthoDB" id="9804647at2"/>
<dbReference type="UniPathway" id="UPA00906">
    <property type="reaction ID" value="UER00895"/>
</dbReference>
<dbReference type="GO" id="GO:0005737">
    <property type="term" value="C:cytoplasm"/>
    <property type="evidence" value="ECO:0007669"/>
    <property type="project" value="UniProtKB-SubCell"/>
</dbReference>
<dbReference type="GO" id="GO:0005524">
    <property type="term" value="F:ATP binding"/>
    <property type="evidence" value="ECO:0007669"/>
    <property type="project" value="UniProtKB-UniRule"/>
</dbReference>
<dbReference type="GO" id="GO:0004828">
    <property type="term" value="F:serine-tRNA ligase activity"/>
    <property type="evidence" value="ECO:0007669"/>
    <property type="project" value="UniProtKB-UniRule"/>
</dbReference>
<dbReference type="GO" id="GO:0016260">
    <property type="term" value="P:selenocysteine biosynthetic process"/>
    <property type="evidence" value="ECO:0007669"/>
    <property type="project" value="UniProtKB-UniRule"/>
</dbReference>
<dbReference type="GO" id="GO:0006434">
    <property type="term" value="P:seryl-tRNA aminoacylation"/>
    <property type="evidence" value="ECO:0007669"/>
    <property type="project" value="UniProtKB-UniRule"/>
</dbReference>
<dbReference type="CDD" id="cd00770">
    <property type="entry name" value="SerRS_core"/>
    <property type="match status" value="1"/>
</dbReference>
<dbReference type="Gene3D" id="3.30.930.10">
    <property type="entry name" value="Bira Bifunctional Protein, Domain 2"/>
    <property type="match status" value="1"/>
</dbReference>
<dbReference type="Gene3D" id="1.10.287.40">
    <property type="entry name" value="Serine-tRNA synthetase, tRNA binding domain"/>
    <property type="match status" value="1"/>
</dbReference>
<dbReference type="HAMAP" id="MF_00176">
    <property type="entry name" value="Ser_tRNA_synth_type1"/>
    <property type="match status" value="1"/>
</dbReference>
<dbReference type="InterPro" id="IPR002314">
    <property type="entry name" value="aa-tRNA-synt_IIb"/>
</dbReference>
<dbReference type="InterPro" id="IPR006195">
    <property type="entry name" value="aa-tRNA-synth_II"/>
</dbReference>
<dbReference type="InterPro" id="IPR045864">
    <property type="entry name" value="aa-tRNA-synth_II/BPL/LPL"/>
</dbReference>
<dbReference type="InterPro" id="IPR002317">
    <property type="entry name" value="Ser-tRNA-ligase_type_1"/>
</dbReference>
<dbReference type="InterPro" id="IPR015866">
    <property type="entry name" value="Ser-tRNA-synth_1_N"/>
</dbReference>
<dbReference type="InterPro" id="IPR042103">
    <property type="entry name" value="SerRS_1_N_sf"/>
</dbReference>
<dbReference type="InterPro" id="IPR033729">
    <property type="entry name" value="SerRS_core"/>
</dbReference>
<dbReference type="InterPro" id="IPR010978">
    <property type="entry name" value="tRNA-bd_arm"/>
</dbReference>
<dbReference type="NCBIfam" id="TIGR00414">
    <property type="entry name" value="serS"/>
    <property type="match status" value="1"/>
</dbReference>
<dbReference type="PANTHER" id="PTHR43697:SF1">
    <property type="entry name" value="SERINE--TRNA LIGASE"/>
    <property type="match status" value="1"/>
</dbReference>
<dbReference type="PANTHER" id="PTHR43697">
    <property type="entry name" value="SERYL-TRNA SYNTHETASE"/>
    <property type="match status" value="1"/>
</dbReference>
<dbReference type="Pfam" id="PF02403">
    <property type="entry name" value="Seryl_tRNA_N"/>
    <property type="match status" value="1"/>
</dbReference>
<dbReference type="Pfam" id="PF00587">
    <property type="entry name" value="tRNA-synt_2b"/>
    <property type="match status" value="1"/>
</dbReference>
<dbReference type="PIRSF" id="PIRSF001529">
    <property type="entry name" value="Ser-tRNA-synth_IIa"/>
    <property type="match status" value="1"/>
</dbReference>
<dbReference type="PRINTS" id="PR00981">
    <property type="entry name" value="TRNASYNTHSER"/>
</dbReference>
<dbReference type="SUPFAM" id="SSF55681">
    <property type="entry name" value="Class II aaRS and biotin synthetases"/>
    <property type="match status" value="1"/>
</dbReference>
<dbReference type="SUPFAM" id="SSF46589">
    <property type="entry name" value="tRNA-binding arm"/>
    <property type="match status" value="1"/>
</dbReference>
<dbReference type="PROSITE" id="PS50862">
    <property type="entry name" value="AA_TRNA_LIGASE_II"/>
    <property type="match status" value="1"/>
</dbReference>
<protein>
    <recommendedName>
        <fullName evidence="1">Serine--tRNA ligase</fullName>
        <ecNumber evidence="1">6.1.1.11</ecNumber>
    </recommendedName>
    <alternativeName>
        <fullName evidence="1">Seryl-tRNA synthetase</fullName>
        <shortName evidence="1">SerRS</shortName>
    </alternativeName>
    <alternativeName>
        <fullName evidence="1">Seryl-tRNA(Ser/Sec) synthetase</fullName>
    </alternativeName>
</protein>
<keyword id="KW-0030">Aminoacyl-tRNA synthetase</keyword>
<keyword id="KW-0067">ATP-binding</keyword>
<keyword id="KW-0963">Cytoplasm</keyword>
<keyword id="KW-0436">Ligase</keyword>
<keyword id="KW-0547">Nucleotide-binding</keyword>
<keyword id="KW-0648">Protein biosynthesis</keyword>
<comment type="function">
    <text evidence="1">Catalyzes the attachment of serine to tRNA(Ser). Is also able to aminoacylate tRNA(Sec) with serine, to form the misacylated tRNA L-seryl-tRNA(Sec), which will be further converted into selenocysteinyl-tRNA(Sec).</text>
</comment>
<comment type="catalytic activity">
    <reaction evidence="1">
        <text>tRNA(Ser) + L-serine + ATP = L-seryl-tRNA(Ser) + AMP + diphosphate + H(+)</text>
        <dbReference type="Rhea" id="RHEA:12292"/>
        <dbReference type="Rhea" id="RHEA-COMP:9669"/>
        <dbReference type="Rhea" id="RHEA-COMP:9703"/>
        <dbReference type="ChEBI" id="CHEBI:15378"/>
        <dbReference type="ChEBI" id="CHEBI:30616"/>
        <dbReference type="ChEBI" id="CHEBI:33019"/>
        <dbReference type="ChEBI" id="CHEBI:33384"/>
        <dbReference type="ChEBI" id="CHEBI:78442"/>
        <dbReference type="ChEBI" id="CHEBI:78533"/>
        <dbReference type="ChEBI" id="CHEBI:456215"/>
        <dbReference type="EC" id="6.1.1.11"/>
    </reaction>
</comment>
<comment type="catalytic activity">
    <reaction evidence="1">
        <text>tRNA(Sec) + L-serine + ATP = L-seryl-tRNA(Sec) + AMP + diphosphate + H(+)</text>
        <dbReference type="Rhea" id="RHEA:42580"/>
        <dbReference type="Rhea" id="RHEA-COMP:9742"/>
        <dbReference type="Rhea" id="RHEA-COMP:10128"/>
        <dbReference type="ChEBI" id="CHEBI:15378"/>
        <dbReference type="ChEBI" id="CHEBI:30616"/>
        <dbReference type="ChEBI" id="CHEBI:33019"/>
        <dbReference type="ChEBI" id="CHEBI:33384"/>
        <dbReference type="ChEBI" id="CHEBI:78442"/>
        <dbReference type="ChEBI" id="CHEBI:78533"/>
        <dbReference type="ChEBI" id="CHEBI:456215"/>
        <dbReference type="EC" id="6.1.1.11"/>
    </reaction>
</comment>
<comment type="pathway">
    <text evidence="1">Aminoacyl-tRNA biosynthesis; selenocysteinyl-tRNA(Sec) biosynthesis; L-seryl-tRNA(Sec) from L-serine and tRNA(Sec): step 1/1.</text>
</comment>
<comment type="subunit">
    <text evidence="1">Homodimer. The tRNA molecule binds across the dimer.</text>
</comment>
<comment type="subcellular location">
    <subcellularLocation>
        <location evidence="1">Cytoplasm</location>
    </subcellularLocation>
</comment>
<comment type="domain">
    <text evidence="1">Consists of two distinct domains, a catalytic core and a N-terminal extension that is involved in tRNA binding.</text>
</comment>
<comment type="similarity">
    <text evidence="1">Belongs to the class-II aminoacyl-tRNA synthetase family. Type-1 seryl-tRNA synthetase subfamily.</text>
</comment>
<reference key="1">
    <citation type="submission" date="2009-01" db="EMBL/GenBank/DDBJ databases">
        <title>Complete sequence of Chloroflexus sp. Y-400-fl.</title>
        <authorList>
            <consortium name="US DOE Joint Genome Institute"/>
            <person name="Lucas S."/>
            <person name="Copeland A."/>
            <person name="Lapidus A."/>
            <person name="Glavina del Rio T."/>
            <person name="Dalin E."/>
            <person name="Tice H."/>
            <person name="Bruce D."/>
            <person name="Goodwin L."/>
            <person name="Pitluck S."/>
            <person name="Sims D."/>
            <person name="Kiss H."/>
            <person name="Brettin T."/>
            <person name="Detter J.C."/>
            <person name="Han C."/>
            <person name="Larimer F."/>
            <person name="Land M."/>
            <person name="Hauser L."/>
            <person name="Kyrpides N."/>
            <person name="Ovchinnikova G."/>
            <person name="Bryant D.A."/>
            <person name="Richardson P."/>
        </authorList>
    </citation>
    <scope>NUCLEOTIDE SEQUENCE [LARGE SCALE GENOMIC DNA]</scope>
    <source>
        <strain>ATCC 29364 / DSM 637 / Y-400-fl</strain>
    </source>
</reference>
<sequence>MLDIKLIREQPDEVKRRLARCGVDGAVVDQVLAFDEQRRRLIYEVETRKAERNTVSKQIGAMKDPAERQAKIDAMRQLGDEIAALDRQLAEVEEQQRAVMLEIRNLPHPDVPDGVDDRDNVVIYQEGEERQLPFPARPHWELGEALGIIDFERGVKLAGSRFYVMRGAGARLQRAVIQWLIDLHLEQGYQEVYTPFVVKESVLWASGQLPKFRDNLYRDEESGLWLVPTAEVPLTSLYADEILDASQLPIYHVAYTPCFRKEQLSAGRDVRGIKRGHQFDKVEMYMFVTPDQSYQALEKLRRDAEECARRLGLPFRTKLLCTGDLGFGSTKTYDIEVWAPGVGEWLEVSSCSNVEAFQARRANLRYRPEPGAKPEFLHTLNGSGLGLPRTIIAIMENYQQEDGSILIPEVLRPYMGGMERIGP</sequence>